<comment type="catalytic activity">
    <reaction>
        <text>L-glutamate + NH4(+) + ATP = L-glutamine + ADP + phosphate + H(+)</text>
        <dbReference type="Rhea" id="RHEA:16169"/>
        <dbReference type="ChEBI" id="CHEBI:15378"/>
        <dbReference type="ChEBI" id="CHEBI:28938"/>
        <dbReference type="ChEBI" id="CHEBI:29985"/>
        <dbReference type="ChEBI" id="CHEBI:30616"/>
        <dbReference type="ChEBI" id="CHEBI:43474"/>
        <dbReference type="ChEBI" id="CHEBI:58359"/>
        <dbReference type="ChEBI" id="CHEBI:456216"/>
        <dbReference type="EC" id="6.3.1.2"/>
    </reaction>
</comment>
<comment type="subunit">
    <text>Homooctamer.</text>
</comment>
<comment type="subcellular location">
    <subcellularLocation>
        <location>Cytoplasm</location>
    </subcellularLocation>
</comment>
<comment type="alternative products">
    <event type="alternative splicing"/>
    <isoform>
        <id>P20478-1</id>
        <name>C</name>
        <sequence type="displayed"/>
    </isoform>
    <isoform>
        <id>P20478-2</id>
        <name>A</name>
        <sequence type="described" ref="VSP_010623"/>
    </isoform>
    <isoform>
        <id>P20478-3</id>
        <name>B</name>
        <sequence type="described" ref="VSP_010624"/>
    </isoform>
</comment>
<comment type="similarity">
    <text evidence="3">Belongs to the glutamine synthetase family.</text>
</comment>
<comment type="sequence caution" evidence="3">
    <conflict type="erroneous initiation">
        <sequence resource="EMBL-CDS" id="AAL28249"/>
    </conflict>
</comment>
<feature type="chain" id="PRO_0000153148" description="Glutamine synthetase 2 cytoplasmic">
    <location>
        <begin position="1"/>
        <end position="369"/>
    </location>
</feature>
<feature type="domain" description="GS beta-grasp" evidence="1">
    <location>
        <begin position="32"/>
        <end position="112"/>
    </location>
</feature>
<feature type="domain" description="GS catalytic" evidence="2">
    <location>
        <begin position="119"/>
        <end position="369"/>
    </location>
</feature>
<feature type="splice variant" id="VSP_010623" description="In isoform A." evidence="3">
    <location>
        <begin position="1"/>
        <end position="103"/>
    </location>
</feature>
<feature type="splice variant" id="VSP_010624" description="In isoform B." evidence="3">
    <original>SAR</original>
    <variation>HSA</variation>
    <location>
        <begin position="2"/>
        <end position="4"/>
    </location>
</feature>
<feature type="sequence conflict" description="In Ref. 1; CAA36970." evidence="3" ref="1">
    <original>FLDFDGHPLGWPKNGFPGPQ</original>
    <variation>SDFDGHHWAGQEWFPDP</variation>
    <location>
        <begin position="145"/>
        <end position="164"/>
    </location>
</feature>
<feature type="sequence conflict" description="In Ref. 1; CAA36970." evidence="3" ref="1">
    <original>VYARDIV</original>
    <variation>SSPRHL</variation>
    <location>
        <begin position="176"/>
        <end position="182"/>
    </location>
</feature>
<feature type="sequence conflict" description="In Ref. 1; CAA36970." evidence="3" ref="1">
    <original>RA</original>
    <variation>AP</variation>
    <location>
        <begin position="187"/>
        <end position="188"/>
    </location>
</feature>
<feature type="sequence conflict" description="In Ref. 1; CAA36970." evidence="3" ref="1">
    <original>IKVSG</original>
    <variation>TQGVP</variation>
    <location>
        <begin position="194"/>
        <end position="198"/>
    </location>
</feature>
<feature type="sequence conflict" description="In Ref. 1; CAA36970." evidence="3" ref="1">
    <original>D</original>
    <variation>H</variation>
    <location>
        <position position="222"/>
    </location>
</feature>
<feature type="sequence conflict" description="In Ref. 1; CAA36970." evidence="3" ref="1">
    <original>R</original>
    <variation>C</variation>
    <location>
        <position position="347"/>
    </location>
</feature>
<feature type="turn" evidence="4">
    <location>
        <begin position="5"/>
        <end position="8"/>
    </location>
</feature>
<feature type="helix" evidence="4">
    <location>
        <begin position="10"/>
        <end position="12"/>
    </location>
</feature>
<feature type="helix" evidence="4">
    <location>
        <begin position="19"/>
        <end position="23"/>
    </location>
</feature>
<feature type="strand" evidence="4">
    <location>
        <begin position="32"/>
        <end position="39"/>
    </location>
</feature>
<feature type="strand" evidence="4">
    <location>
        <begin position="46"/>
        <end position="55"/>
    </location>
</feature>
<feature type="helix" evidence="4">
    <location>
        <begin position="60"/>
        <end position="62"/>
    </location>
</feature>
<feature type="strand" evidence="4">
    <location>
        <begin position="66"/>
        <end position="69"/>
    </location>
</feature>
<feature type="helix" evidence="4">
    <location>
        <begin position="70"/>
        <end position="72"/>
    </location>
</feature>
<feature type="strand" evidence="4">
    <location>
        <begin position="82"/>
        <end position="92"/>
    </location>
</feature>
<feature type="turn" evidence="4">
    <location>
        <begin position="94"/>
        <end position="96"/>
    </location>
</feature>
<feature type="strand" evidence="4">
    <location>
        <begin position="101"/>
        <end position="108"/>
    </location>
</feature>
<feature type="helix" evidence="4">
    <location>
        <begin position="120"/>
        <end position="129"/>
    </location>
</feature>
<feature type="helix" evidence="4">
    <location>
        <begin position="131"/>
        <end position="133"/>
    </location>
</feature>
<feature type="strand" evidence="4">
    <location>
        <begin position="136"/>
        <end position="146"/>
    </location>
</feature>
<feature type="strand" evidence="4">
    <location>
        <begin position="150"/>
        <end position="152"/>
    </location>
</feature>
<feature type="strand" evidence="4">
    <location>
        <begin position="164"/>
        <end position="166"/>
    </location>
</feature>
<feature type="turn" evidence="4">
    <location>
        <begin position="173"/>
        <end position="175"/>
    </location>
</feature>
<feature type="helix" evidence="4">
    <location>
        <begin position="179"/>
        <end position="192"/>
    </location>
</feature>
<feature type="strand" evidence="4">
    <location>
        <begin position="196"/>
        <end position="201"/>
    </location>
</feature>
<feature type="strand" evidence="4">
    <location>
        <begin position="207"/>
        <end position="216"/>
    </location>
</feature>
<feature type="helix" evidence="4">
    <location>
        <begin position="219"/>
        <end position="237"/>
    </location>
</feature>
<feature type="strand" evidence="4">
    <location>
        <begin position="241"/>
        <end position="243"/>
    </location>
</feature>
<feature type="strand" evidence="4">
    <location>
        <begin position="251"/>
        <end position="253"/>
    </location>
</feature>
<feature type="strand" evidence="4">
    <location>
        <begin position="257"/>
        <end position="263"/>
    </location>
</feature>
<feature type="helix" evidence="4">
    <location>
        <begin position="265"/>
        <end position="268"/>
    </location>
</feature>
<feature type="turn" evidence="4">
    <location>
        <begin position="270"/>
        <end position="272"/>
    </location>
</feature>
<feature type="helix" evidence="4">
    <location>
        <begin position="273"/>
        <end position="285"/>
    </location>
</feature>
<feature type="helix" evidence="4">
    <location>
        <begin position="287"/>
        <end position="290"/>
    </location>
</feature>
<feature type="strand" evidence="4">
    <location>
        <begin position="293"/>
        <end position="295"/>
    </location>
</feature>
<feature type="helix" evidence="4">
    <location>
        <begin position="302"/>
        <end position="305"/>
    </location>
</feature>
<feature type="strand" evidence="4">
    <location>
        <begin position="306"/>
        <end position="312"/>
    </location>
</feature>
<feature type="strand" evidence="4">
    <location>
        <begin position="315"/>
        <end position="317"/>
    </location>
</feature>
<feature type="strand" evidence="4">
    <location>
        <begin position="320"/>
        <end position="323"/>
    </location>
</feature>
<feature type="strand" evidence="4">
    <location>
        <begin position="327"/>
        <end position="331"/>
    </location>
</feature>
<feature type="helix" evidence="4">
    <location>
        <begin position="333"/>
        <end position="338"/>
    </location>
</feature>
<feature type="strand" evidence="4">
    <location>
        <begin position="343"/>
        <end position="345"/>
    </location>
</feature>
<feature type="helix" evidence="4">
    <location>
        <begin position="354"/>
        <end position="365"/>
    </location>
</feature>
<keyword id="KW-0002">3D-structure</keyword>
<keyword id="KW-0025">Alternative splicing</keyword>
<keyword id="KW-0067">ATP-binding</keyword>
<keyword id="KW-0963">Cytoplasm</keyword>
<keyword id="KW-0436">Ligase</keyword>
<keyword id="KW-0547">Nucleotide-binding</keyword>
<keyword id="KW-1185">Reference proteome</keyword>
<proteinExistence type="evidence at protein level"/>
<protein>
    <recommendedName>
        <fullName>Glutamine synthetase 2 cytoplasmic</fullName>
        <ecNumber>6.3.1.2</ecNumber>
    </recommendedName>
    <alternativeName>
        <fullName>Glutamate--ammonia ligase 2</fullName>
    </alternativeName>
</protein>
<reference key="1">
    <citation type="journal article" date="1990" name="J. Mol. Biol.">
        <title>Homologous nuclear genes encode cytoplasmic and mitochondrial glutamine synthetase in Drosophila melanogaster.</title>
        <authorList>
            <person name="Caizzi R."/>
            <person name="Bozzetti M.P."/>
            <person name="Caggese C."/>
            <person name="Ritossa F."/>
        </authorList>
    </citation>
    <scope>NUCLEOTIDE SEQUENCE (ISOFORM C)</scope>
</reference>
<reference key="2">
    <citation type="journal article" date="2000" name="Science">
        <title>The genome sequence of Drosophila melanogaster.</title>
        <authorList>
            <person name="Adams M.D."/>
            <person name="Celniker S.E."/>
            <person name="Holt R.A."/>
            <person name="Evans C.A."/>
            <person name="Gocayne J.D."/>
            <person name="Amanatides P.G."/>
            <person name="Scherer S.E."/>
            <person name="Li P.W."/>
            <person name="Hoskins R.A."/>
            <person name="Galle R.F."/>
            <person name="George R.A."/>
            <person name="Lewis S.E."/>
            <person name="Richards S."/>
            <person name="Ashburner M."/>
            <person name="Henderson S.N."/>
            <person name="Sutton G.G."/>
            <person name="Wortman J.R."/>
            <person name="Yandell M.D."/>
            <person name="Zhang Q."/>
            <person name="Chen L.X."/>
            <person name="Brandon R.C."/>
            <person name="Rogers Y.-H.C."/>
            <person name="Blazej R.G."/>
            <person name="Champe M."/>
            <person name="Pfeiffer B.D."/>
            <person name="Wan K.H."/>
            <person name="Doyle C."/>
            <person name="Baxter E.G."/>
            <person name="Helt G."/>
            <person name="Nelson C.R."/>
            <person name="Miklos G.L.G."/>
            <person name="Abril J.F."/>
            <person name="Agbayani A."/>
            <person name="An H.-J."/>
            <person name="Andrews-Pfannkoch C."/>
            <person name="Baldwin D."/>
            <person name="Ballew R.M."/>
            <person name="Basu A."/>
            <person name="Baxendale J."/>
            <person name="Bayraktaroglu L."/>
            <person name="Beasley E.M."/>
            <person name="Beeson K.Y."/>
            <person name="Benos P.V."/>
            <person name="Berman B.P."/>
            <person name="Bhandari D."/>
            <person name="Bolshakov S."/>
            <person name="Borkova D."/>
            <person name="Botchan M.R."/>
            <person name="Bouck J."/>
            <person name="Brokstein P."/>
            <person name="Brottier P."/>
            <person name="Burtis K.C."/>
            <person name="Busam D.A."/>
            <person name="Butler H."/>
            <person name="Cadieu E."/>
            <person name="Center A."/>
            <person name="Chandra I."/>
            <person name="Cherry J.M."/>
            <person name="Cawley S."/>
            <person name="Dahlke C."/>
            <person name="Davenport L.B."/>
            <person name="Davies P."/>
            <person name="de Pablos B."/>
            <person name="Delcher A."/>
            <person name="Deng Z."/>
            <person name="Mays A.D."/>
            <person name="Dew I."/>
            <person name="Dietz S.M."/>
            <person name="Dodson K."/>
            <person name="Doup L.E."/>
            <person name="Downes M."/>
            <person name="Dugan-Rocha S."/>
            <person name="Dunkov B.C."/>
            <person name="Dunn P."/>
            <person name="Durbin K.J."/>
            <person name="Evangelista C.C."/>
            <person name="Ferraz C."/>
            <person name="Ferriera S."/>
            <person name="Fleischmann W."/>
            <person name="Fosler C."/>
            <person name="Gabrielian A.E."/>
            <person name="Garg N.S."/>
            <person name="Gelbart W.M."/>
            <person name="Glasser K."/>
            <person name="Glodek A."/>
            <person name="Gong F."/>
            <person name="Gorrell J.H."/>
            <person name="Gu Z."/>
            <person name="Guan P."/>
            <person name="Harris M."/>
            <person name="Harris N.L."/>
            <person name="Harvey D.A."/>
            <person name="Heiman T.J."/>
            <person name="Hernandez J.R."/>
            <person name="Houck J."/>
            <person name="Hostin D."/>
            <person name="Houston K.A."/>
            <person name="Howland T.J."/>
            <person name="Wei M.-H."/>
            <person name="Ibegwam C."/>
            <person name="Jalali M."/>
            <person name="Kalush F."/>
            <person name="Karpen G.H."/>
            <person name="Ke Z."/>
            <person name="Kennison J.A."/>
            <person name="Ketchum K.A."/>
            <person name="Kimmel B.E."/>
            <person name="Kodira C.D."/>
            <person name="Kraft C.L."/>
            <person name="Kravitz S."/>
            <person name="Kulp D."/>
            <person name="Lai Z."/>
            <person name="Lasko P."/>
            <person name="Lei Y."/>
            <person name="Levitsky A.A."/>
            <person name="Li J.H."/>
            <person name="Li Z."/>
            <person name="Liang Y."/>
            <person name="Lin X."/>
            <person name="Liu X."/>
            <person name="Mattei B."/>
            <person name="McIntosh T.C."/>
            <person name="McLeod M.P."/>
            <person name="McPherson D."/>
            <person name="Merkulov G."/>
            <person name="Milshina N.V."/>
            <person name="Mobarry C."/>
            <person name="Morris J."/>
            <person name="Moshrefi A."/>
            <person name="Mount S.M."/>
            <person name="Moy M."/>
            <person name="Murphy B."/>
            <person name="Murphy L."/>
            <person name="Muzny D.M."/>
            <person name="Nelson D.L."/>
            <person name="Nelson D.R."/>
            <person name="Nelson K.A."/>
            <person name="Nixon K."/>
            <person name="Nusskern D.R."/>
            <person name="Pacleb J.M."/>
            <person name="Palazzolo M."/>
            <person name="Pittman G.S."/>
            <person name="Pan S."/>
            <person name="Pollard J."/>
            <person name="Puri V."/>
            <person name="Reese M.G."/>
            <person name="Reinert K."/>
            <person name="Remington K."/>
            <person name="Saunders R.D.C."/>
            <person name="Scheeler F."/>
            <person name="Shen H."/>
            <person name="Shue B.C."/>
            <person name="Siden-Kiamos I."/>
            <person name="Simpson M."/>
            <person name="Skupski M.P."/>
            <person name="Smith T.J."/>
            <person name="Spier E."/>
            <person name="Spradling A.C."/>
            <person name="Stapleton M."/>
            <person name="Strong R."/>
            <person name="Sun E."/>
            <person name="Svirskas R."/>
            <person name="Tector C."/>
            <person name="Turner R."/>
            <person name="Venter E."/>
            <person name="Wang A.H."/>
            <person name="Wang X."/>
            <person name="Wang Z.-Y."/>
            <person name="Wassarman D.A."/>
            <person name="Weinstock G.M."/>
            <person name="Weissenbach J."/>
            <person name="Williams S.M."/>
            <person name="Woodage T."/>
            <person name="Worley K.C."/>
            <person name="Wu D."/>
            <person name="Yang S."/>
            <person name="Yao Q.A."/>
            <person name="Ye J."/>
            <person name="Yeh R.-F."/>
            <person name="Zaveri J.S."/>
            <person name="Zhan M."/>
            <person name="Zhang G."/>
            <person name="Zhao Q."/>
            <person name="Zheng L."/>
            <person name="Zheng X.H."/>
            <person name="Zhong F.N."/>
            <person name="Zhong W."/>
            <person name="Zhou X."/>
            <person name="Zhu S.C."/>
            <person name="Zhu X."/>
            <person name="Smith H.O."/>
            <person name="Gibbs R.A."/>
            <person name="Myers E.W."/>
            <person name="Rubin G.M."/>
            <person name="Venter J.C."/>
        </authorList>
    </citation>
    <scope>NUCLEOTIDE SEQUENCE [LARGE SCALE GENOMIC DNA]</scope>
    <source>
        <strain>Berkeley</strain>
    </source>
</reference>
<reference key="3">
    <citation type="journal article" date="2002" name="Genome Biol.">
        <title>Annotation of the Drosophila melanogaster euchromatic genome: a systematic review.</title>
        <authorList>
            <person name="Misra S."/>
            <person name="Crosby M.A."/>
            <person name="Mungall C.J."/>
            <person name="Matthews B.B."/>
            <person name="Campbell K.S."/>
            <person name="Hradecky P."/>
            <person name="Huang Y."/>
            <person name="Kaminker J.S."/>
            <person name="Millburn G.H."/>
            <person name="Prochnik S.E."/>
            <person name="Smith C.D."/>
            <person name="Tupy J.L."/>
            <person name="Whitfield E.J."/>
            <person name="Bayraktaroglu L."/>
            <person name="Berman B.P."/>
            <person name="Bettencourt B.R."/>
            <person name="Celniker S.E."/>
            <person name="de Grey A.D.N.J."/>
            <person name="Drysdale R.A."/>
            <person name="Harris N.L."/>
            <person name="Richter J."/>
            <person name="Russo S."/>
            <person name="Schroeder A.J."/>
            <person name="Shu S.Q."/>
            <person name="Stapleton M."/>
            <person name="Yamada C."/>
            <person name="Ashburner M."/>
            <person name="Gelbart W.M."/>
            <person name="Rubin G.M."/>
            <person name="Lewis S.E."/>
        </authorList>
    </citation>
    <scope>GENOME REANNOTATION</scope>
    <scope>ALTERNATIVE SPLICING</scope>
    <source>
        <strain>Berkeley</strain>
    </source>
</reference>
<reference key="4">
    <citation type="journal article" date="2002" name="Genome Biol.">
        <title>A Drosophila full-length cDNA resource.</title>
        <authorList>
            <person name="Stapleton M."/>
            <person name="Carlson J.W."/>
            <person name="Brokstein P."/>
            <person name="Yu C."/>
            <person name="Champe M."/>
            <person name="George R.A."/>
            <person name="Guarin H."/>
            <person name="Kronmiller B."/>
            <person name="Pacleb J.M."/>
            <person name="Park S."/>
            <person name="Wan K.H."/>
            <person name="Rubin G.M."/>
            <person name="Celniker S.E."/>
        </authorList>
    </citation>
    <scope>NUCLEOTIDE SEQUENCE [LARGE SCALE MRNA] OF 229-369</scope>
    <source>
        <strain>Berkeley</strain>
        <tissue>Head</tissue>
    </source>
</reference>
<name>GLNA2_DROME</name>
<organism>
    <name type="scientific">Drosophila melanogaster</name>
    <name type="common">Fruit fly</name>
    <dbReference type="NCBI Taxonomy" id="7227"/>
    <lineage>
        <taxon>Eukaryota</taxon>
        <taxon>Metazoa</taxon>
        <taxon>Ecdysozoa</taxon>
        <taxon>Arthropoda</taxon>
        <taxon>Hexapoda</taxon>
        <taxon>Insecta</taxon>
        <taxon>Pterygota</taxon>
        <taxon>Neoptera</taxon>
        <taxon>Endopterygota</taxon>
        <taxon>Diptera</taxon>
        <taxon>Brachycera</taxon>
        <taxon>Muscomorpha</taxon>
        <taxon>Ephydroidea</taxon>
        <taxon>Drosophilidae</taxon>
        <taxon>Drosophila</taxon>
        <taxon>Sophophora</taxon>
    </lineage>
</organism>
<evidence type="ECO:0000255" key="1">
    <source>
        <dbReference type="PROSITE-ProRule" id="PRU01330"/>
    </source>
</evidence>
<evidence type="ECO:0000255" key="2">
    <source>
        <dbReference type="PROSITE-ProRule" id="PRU01331"/>
    </source>
</evidence>
<evidence type="ECO:0000305" key="3"/>
<evidence type="ECO:0007829" key="4">
    <source>
        <dbReference type="PDB" id="7CPR"/>
    </source>
</evidence>
<accession>P20478</accession>
<accession>Q8IR90</accession>
<accession>Q95SM4</accession>
<accession>Q9VYZ0</accession>
<gene>
    <name type="primary">Gs2</name>
    <name type="ORF">CG1743</name>
</gene>
<dbReference type="EC" id="6.3.1.2"/>
<dbReference type="EMBL" id="X52759">
    <property type="protein sequence ID" value="CAA36970.1"/>
    <property type="molecule type" value="mRNA"/>
</dbReference>
<dbReference type="EMBL" id="AE014298">
    <property type="protein sequence ID" value="AAF48043.2"/>
    <property type="molecule type" value="Genomic_DNA"/>
</dbReference>
<dbReference type="EMBL" id="AE014298">
    <property type="protein sequence ID" value="AAN09632.1"/>
    <property type="molecule type" value="Genomic_DNA"/>
</dbReference>
<dbReference type="EMBL" id="AE014298">
    <property type="protein sequence ID" value="AAS65314.1"/>
    <property type="molecule type" value="Genomic_DNA"/>
</dbReference>
<dbReference type="EMBL" id="AY060701">
    <property type="protein sequence ID" value="AAL28249.1"/>
    <property type="status" value="ALT_INIT"/>
    <property type="molecule type" value="mRNA"/>
</dbReference>
<dbReference type="PIR" id="S09108">
    <property type="entry name" value="AJFF2C"/>
</dbReference>
<dbReference type="RefSeq" id="NP_001285122.1">
    <molecule id="P20478-1"/>
    <property type="nucleotide sequence ID" value="NM_001298193.1"/>
</dbReference>
<dbReference type="RefSeq" id="NP_001285123.1">
    <molecule id="P20478-1"/>
    <property type="nucleotide sequence ID" value="NM_001298194.1"/>
</dbReference>
<dbReference type="RefSeq" id="NP_511123.2">
    <molecule id="P20478-1"/>
    <property type="nucleotide sequence ID" value="NM_078568.3"/>
</dbReference>
<dbReference type="RefSeq" id="NP_727525.1">
    <molecule id="P20478-3"/>
    <property type="nucleotide sequence ID" value="NM_167284.2"/>
</dbReference>
<dbReference type="RefSeq" id="NP_996408.1">
    <molecule id="P20478-2"/>
    <property type="nucleotide sequence ID" value="NM_206685.2"/>
</dbReference>
<dbReference type="PDB" id="7CPR">
    <property type="method" value="X-ray"/>
    <property type="resolution" value="2.12 A"/>
    <property type="chains" value="A/B/C/D/E/F/G/H/I/J=3-369"/>
</dbReference>
<dbReference type="PDBsum" id="7CPR"/>
<dbReference type="SMR" id="P20478"/>
<dbReference type="BioGRID" id="58498">
    <property type="interactions" value="2"/>
</dbReference>
<dbReference type="FunCoup" id="P20478">
    <property type="interactions" value="963"/>
</dbReference>
<dbReference type="IntAct" id="P20478">
    <property type="interactions" value="27"/>
</dbReference>
<dbReference type="STRING" id="7227.FBpp0310162"/>
<dbReference type="PaxDb" id="7227-FBpp0073344"/>
<dbReference type="DNASU" id="32087"/>
<dbReference type="EnsemblMetazoa" id="FBtr0073494">
    <molecule id="P20478-3"/>
    <property type="protein sequence ID" value="FBpp0073344"/>
    <property type="gene ID" value="FBgn0001145"/>
</dbReference>
<dbReference type="EnsemblMetazoa" id="FBtr0073495">
    <molecule id="P20478-1"/>
    <property type="protein sequence ID" value="FBpp0073345"/>
    <property type="gene ID" value="FBgn0001145"/>
</dbReference>
<dbReference type="EnsemblMetazoa" id="FBtr0073496">
    <molecule id="P20478-2"/>
    <property type="protein sequence ID" value="FBpp0089332"/>
    <property type="gene ID" value="FBgn0001145"/>
</dbReference>
<dbReference type="EnsemblMetazoa" id="FBtr0343562">
    <molecule id="P20478-1"/>
    <property type="protein sequence ID" value="FBpp0310163"/>
    <property type="gene ID" value="FBgn0001145"/>
</dbReference>
<dbReference type="EnsemblMetazoa" id="FBtr0343563">
    <molecule id="P20478-1"/>
    <property type="protein sequence ID" value="FBpp0310164"/>
    <property type="gene ID" value="FBgn0001145"/>
</dbReference>
<dbReference type="GeneID" id="32087"/>
<dbReference type="KEGG" id="dme:Dmel_CG1743"/>
<dbReference type="AGR" id="FB:FBgn0001145"/>
<dbReference type="CTD" id="32087"/>
<dbReference type="FlyBase" id="FBgn0001145">
    <property type="gene designation" value="Gs2"/>
</dbReference>
<dbReference type="VEuPathDB" id="VectorBase:FBgn0001145"/>
<dbReference type="eggNOG" id="KOG0683">
    <property type="taxonomic scope" value="Eukaryota"/>
</dbReference>
<dbReference type="GeneTree" id="ENSGT00390000010047"/>
<dbReference type="HOGENOM" id="CLU_036762_1_1_1"/>
<dbReference type="InParanoid" id="P20478"/>
<dbReference type="OMA" id="DRRPNAN"/>
<dbReference type="OrthoDB" id="1936100at2759"/>
<dbReference type="PhylomeDB" id="P20478"/>
<dbReference type="Reactome" id="R-DME-210455">
    <property type="pathway name" value="Astrocytic Glutamate-Glutamine Uptake And Metabolism"/>
</dbReference>
<dbReference type="Reactome" id="R-DME-8964539">
    <property type="pathway name" value="Glutamate and glutamine metabolism"/>
</dbReference>
<dbReference type="SignaLink" id="P20478"/>
<dbReference type="BioGRID-ORCS" id="32087">
    <property type="hits" value="0 hits in 3 CRISPR screens"/>
</dbReference>
<dbReference type="ChiTaRS" id="Gs2">
    <property type="organism name" value="fly"/>
</dbReference>
<dbReference type="GenomeRNAi" id="32087"/>
<dbReference type="PRO" id="PR:P20478"/>
<dbReference type="Proteomes" id="UP000000803">
    <property type="component" value="Chromosome X"/>
</dbReference>
<dbReference type="Bgee" id="FBgn0001145">
    <property type="expression patterns" value="Expressed in reticular neuropil associated glial cell (Drosophila) in brain and 259 other cell types or tissues"/>
</dbReference>
<dbReference type="ExpressionAtlas" id="P20478">
    <property type="expression patterns" value="baseline and differential"/>
</dbReference>
<dbReference type="GO" id="GO:0005737">
    <property type="term" value="C:cytoplasm"/>
    <property type="evidence" value="ECO:0000250"/>
    <property type="project" value="FlyBase"/>
</dbReference>
<dbReference type="GO" id="GO:0005524">
    <property type="term" value="F:ATP binding"/>
    <property type="evidence" value="ECO:0007669"/>
    <property type="project" value="UniProtKB-KW"/>
</dbReference>
<dbReference type="GO" id="GO:0004356">
    <property type="term" value="F:glutamine synthetase activity"/>
    <property type="evidence" value="ECO:0000314"/>
    <property type="project" value="FlyBase"/>
</dbReference>
<dbReference type="GO" id="GO:0006538">
    <property type="term" value="P:glutamate catabolic process"/>
    <property type="evidence" value="ECO:0000315"/>
    <property type="project" value="FlyBase"/>
</dbReference>
<dbReference type="GO" id="GO:0006542">
    <property type="term" value="P:glutamine biosynthetic process"/>
    <property type="evidence" value="ECO:0000318"/>
    <property type="project" value="GO_Central"/>
</dbReference>
<dbReference type="GO" id="GO:0007416">
    <property type="term" value="P:synapse assembly"/>
    <property type="evidence" value="ECO:0000315"/>
    <property type="project" value="FlyBase"/>
</dbReference>
<dbReference type="FunFam" id="3.10.20.70:FF:000004">
    <property type="entry name" value="Glutamine synthetase"/>
    <property type="match status" value="1"/>
</dbReference>
<dbReference type="FunFam" id="3.30.590.10:FF:000011">
    <property type="entry name" value="Glutamine synthetase"/>
    <property type="match status" value="1"/>
</dbReference>
<dbReference type="Gene3D" id="3.10.20.70">
    <property type="entry name" value="Glutamine synthetase, N-terminal domain"/>
    <property type="match status" value="1"/>
</dbReference>
<dbReference type="Gene3D" id="3.30.590.10">
    <property type="entry name" value="Glutamine synthetase/guanido kinase, catalytic domain"/>
    <property type="match status" value="2"/>
</dbReference>
<dbReference type="InterPro" id="IPR008147">
    <property type="entry name" value="Gln_synt_N"/>
</dbReference>
<dbReference type="InterPro" id="IPR036651">
    <property type="entry name" value="Gln_synt_N_sf"/>
</dbReference>
<dbReference type="InterPro" id="IPR014746">
    <property type="entry name" value="Gln_synth/guanido_kin_cat_dom"/>
</dbReference>
<dbReference type="InterPro" id="IPR008146">
    <property type="entry name" value="Gln_synth_cat_dom"/>
</dbReference>
<dbReference type="InterPro" id="IPR027303">
    <property type="entry name" value="Gln_synth_gly_rich_site"/>
</dbReference>
<dbReference type="InterPro" id="IPR027302">
    <property type="entry name" value="Gln_synth_N_conserv_site"/>
</dbReference>
<dbReference type="InterPro" id="IPR050292">
    <property type="entry name" value="Glutamine_Synthetase"/>
</dbReference>
<dbReference type="PANTHER" id="PTHR20852">
    <property type="entry name" value="GLUTAMINE SYNTHETASE"/>
    <property type="match status" value="1"/>
</dbReference>
<dbReference type="PANTHER" id="PTHR20852:SF57">
    <property type="entry name" value="GLUTAMINE SYNTHETASE 2 CYTOPLASMIC"/>
    <property type="match status" value="1"/>
</dbReference>
<dbReference type="Pfam" id="PF00120">
    <property type="entry name" value="Gln-synt_C"/>
    <property type="match status" value="1"/>
</dbReference>
<dbReference type="Pfam" id="PF03951">
    <property type="entry name" value="Gln-synt_N"/>
    <property type="match status" value="1"/>
</dbReference>
<dbReference type="SMART" id="SM01230">
    <property type="entry name" value="Gln-synt_C"/>
    <property type="match status" value="1"/>
</dbReference>
<dbReference type="SUPFAM" id="SSF54368">
    <property type="entry name" value="Glutamine synthetase, N-terminal domain"/>
    <property type="match status" value="1"/>
</dbReference>
<dbReference type="SUPFAM" id="SSF55931">
    <property type="entry name" value="Glutamine synthetase/guanido kinase"/>
    <property type="match status" value="1"/>
</dbReference>
<dbReference type="PROSITE" id="PS00180">
    <property type="entry name" value="GLNA_1"/>
    <property type="match status" value="1"/>
</dbReference>
<dbReference type="PROSITE" id="PS00181">
    <property type="entry name" value="GLNA_ATP"/>
    <property type="match status" value="1"/>
</dbReference>
<dbReference type="PROSITE" id="PS51986">
    <property type="entry name" value="GS_BETA_GRASP"/>
    <property type="match status" value="1"/>
</dbReference>
<dbReference type="PROSITE" id="PS51987">
    <property type="entry name" value="GS_CATALYTIC"/>
    <property type="match status" value="1"/>
</dbReference>
<sequence>MSARILEDSPNARINKTILDRYLSLPLQENIVQATYVWIDGTGEDLRCKDRTLDFIPQSPKELPVWNYDGSSCYQAEGSNSDTYLYPVAIYKDPFRRGNNILVMCDTYKFDGTPTDTNKRKTCLEVANKCAAEEPWFGIEQEYTFLDFDGHPLGWPKNGFPGPQGPYYCGVGANKVYARDIVDAHYRACLYAGIKVSGTNAEVMPAQWEFQVGPCEGISIGDDLWMARFLLHRISEEFGIVSTLDPKPMPGDWNGAGAHTNVSTKAMREDGGIRDIEKAVAKLSKCHERHIRAYDPKQGQDNARRLTGKHETSSINDFSAGVANRGCSIRIPRGVNDDGKGYFEDRRPSSNCDPYSVVEAILRTICLDE</sequence>